<feature type="transit peptide" description="Chloroplast" evidence="1">
    <location>
        <begin position="1"/>
        <end position="54"/>
    </location>
</feature>
<feature type="chain" id="PRO_0000031528" description="Ribulose bisphosphate carboxylase small subunit, chloroplastic 2" evidence="1">
    <location>
        <begin position="55"/>
        <end position="180"/>
    </location>
</feature>
<feature type="sequence conflict" description="In Ref. 2; AAA33036." evidence="4" ref="2">
    <original>T</original>
    <variation>I</variation>
    <location>
        <position position="154"/>
    </location>
</feature>
<keyword id="KW-0113">Calvin cycle</keyword>
<keyword id="KW-0120">Carbon dioxide fixation</keyword>
<keyword id="KW-0150">Chloroplast</keyword>
<keyword id="KW-0601">Photorespiration</keyword>
<keyword id="KW-0602">Photosynthesis</keyword>
<keyword id="KW-0934">Plastid</keyword>
<keyword id="KW-0809">Transit peptide</keyword>
<accession>Q04450</accession>
<gene>
    <name evidence="1" type="primary">RBCS2</name>
    <name evidence="3" type="synonym">RBCS-2</name>
</gene>
<organism>
    <name type="scientific">Mesembryanthemum crystallinum</name>
    <name type="common">Common ice plant</name>
    <name type="synonym">Cryophytum crystallinum</name>
    <dbReference type="NCBI Taxonomy" id="3544"/>
    <lineage>
        <taxon>Eukaryota</taxon>
        <taxon>Viridiplantae</taxon>
        <taxon>Streptophyta</taxon>
        <taxon>Embryophyta</taxon>
        <taxon>Tracheophyta</taxon>
        <taxon>Spermatophyta</taxon>
        <taxon>Magnoliopsida</taxon>
        <taxon>eudicotyledons</taxon>
        <taxon>Gunneridae</taxon>
        <taxon>Pentapetalae</taxon>
        <taxon>Caryophyllales</taxon>
        <taxon>Aizoaceae</taxon>
        <taxon>Mesembryanthemum</taxon>
        <taxon>Mesembryanthemum subgen. Cryophytum</taxon>
    </lineage>
</organism>
<dbReference type="EMBL" id="L10214">
    <property type="protein sequence ID" value="AAA03694.1"/>
    <property type="molecule type" value="Unassigned_DNA"/>
</dbReference>
<dbReference type="EMBL" id="M38316">
    <property type="protein sequence ID" value="AAA33036.1"/>
    <property type="molecule type" value="mRNA"/>
</dbReference>
<dbReference type="PIR" id="S35246">
    <property type="entry name" value="S35246"/>
</dbReference>
<dbReference type="SMR" id="Q04450"/>
<dbReference type="GO" id="GO:0009507">
    <property type="term" value="C:chloroplast"/>
    <property type="evidence" value="ECO:0007669"/>
    <property type="project" value="UniProtKB-SubCell"/>
</dbReference>
<dbReference type="GO" id="GO:0016984">
    <property type="term" value="F:ribulose-bisphosphate carboxylase activity"/>
    <property type="evidence" value="ECO:0007669"/>
    <property type="project" value="UniProtKB-UniRule"/>
</dbReference>
<dbReference type="GO" id="GO:0009853">
    <property type="term" value="P:photorespiration"/>
    <property type="evidence" value="ECO:0007669"/>
    <property type="project" value="UniProtKB-KW"/>
</dbReference>
<dbReference type="GO" id="GO:0019253">
    <property type="term" value="P:reductive pentose-phosphate cycle"/>
    <property type="evidence" value="ECO:0007669"/>
    <property type="project" value="UniProtKB-UniRule"/>
</dbReference>
<dbReference type="CDD" id="cd03527">
    <property type="entry name" value="RuBisCO_small"/>
    <property type="match status" value="1"/>
</dbReference>
<dbReference type="FunFam" id="3.30.190.10:FF:000001">
    <property type="entry name" value="Ribulose bisphosphate carboxylase small chain, chloroplastic"/>
    <property type="match status" value="1"/>
</dbReference>
<dbReference type="Gene3D" id="3.30.190.10">
    <property type="entry name" value="Ribulose bisphosphate carboxylase, small subunit"/>
    <property type="match status" value="1"/>
</dbReference>
<dbReference type="HAMAP" id="MF_00859">
    <property type="entry name" value="RuBisCO_S_bact"/>
    <property type="match status" value="1"/>
</dbReference>
<dbReference type="InterPro" id="IPR024681">
    <property type="entry name" value="RuBisCO_ssu"/>
</dbReference>
<dbReference type="InterPro" id="IPR000894">
    <property type="entry name" value="RuBisCO_ssu_dom"/>
</dbReference>
<dbReference type="InterPro" id="IPR024680">
    <property type="entry name" value="RuBisCO_ssu_N"/>
</dbReference>
<dbReference type="InterPro" id="IPR036385">
    <property type="entry name" value="RuBisCO_ssu_sf"/>
</dbReference>
<dbReference type="PANTHER" id="PTHR31262">
    <property type="entry name" value="RIBULOSE BISPHOSPHATE CARBOXYLASE SMALL CHAIN 1, CHLOROPLASTIC"/>
    <property type="match status" value="1"/>
</dbReference>
<dbReference type="PANTHER" id="PTHR31262:SF10">
    <property type="entry name" value="RIBULOSE BISPHOSPHATE CARBOXYLASE SMALL SUBUNIT 1A, CHLOROPLASTIC-RELATED"/>
    <property type="match status" value="1"/>
</dbReference>
<dbReference type="Pfam" id="PF12338">
    <property type="entry name" value="RbcS"/>
    <property type="match status" value="1"/>
</dbReference>
<dbReference type="Pfam" id="PF00101">
    <property type="entry name" value="RuBisCO_small"/>
    <property type="match status" value="1"/>
</dbReference>
<dbReference type="PRINTS" id="PR00152">
    <property type="entry name" value="RUBISCOSMALL"/>
</dbReference>
<dbReference type="SMART" id="SM00961">
    <property type="entry name" value="RuBisCO_small"/>
    <property type="match status" value="1"/>
</dbReference>
<dbReference type="SUPFAM" id="SSF55239">
    <property type="entry name" value="RuBisCO, small subunit"/>
    <property type="match status" value="1"/>
</dbReference>
<sequence length="180" mass="20084">MASMMSNAAVVGRTTPAQASMVAPFTGLKSVSAFPVTKKSNDITSIASNGGRVQCMQVWPPLGKKKFETLSYLPPLSEESLMKEVQYLLNNGWVPCLEFEPTHGFVYREHGNTPGYYDGRYWTMWKLPMFGCTDPSQVVAELEEAKKAYPEAFTRIIGFDNVRQVQCISFIAYKPASYDA</sequence>
<comment type="function">
    <text evidence="1">RuBisCO catalyzes two reactions: the carboxylation of D-ribulose 1,5-bisphosphate, the primary event in carbon dioxide fixation, as well as the oxidative fragmentation of the pentose substrate. Both reactions occur simultaneously and in competition at the same active site. Although the small subunit is not catalytic it is essential for maximal activity.</text>
</comment>
<comment type="subunit">
    <text evidence="1">Heterohexadecamer of 8 large and 8 small subunits.</text>
</comment>
<comment type="subcellular location">
    <subcellularLocation>
        <location evidence="1">Plastid</location>
        <location evidence="1">Chloroplast</location>
    </subcellularLocation>
</comment>
<comment type="induction">
    <text evidence="2">The least expressed of the 6 small subunit genes.</text>
</comment>
<comment type="miscellaneous">
    <text evidence="1">The basic functional RuBisCO is composed of a large chain homodimer in a 'head-to-tail' conformation. In form I RuBisCO this homodimer is arranged in a barrel-like tetramer with the small subunits forming a tetrameric 'cap' on each end of the 'barrel'.</text>
</comment>
<comment type="similarity">
    <text evidence="1">Belongs to the RuBisCO small chain family.</text>
</comment>
<name>RBS2_MESCR</name>
<proteinExistence type="evidence at transcript level"/>
<reference key="1">
    <citation type="journal article" date="1993" name="Mol. Gen. Genet.">
        <title>The six genes of the Rubisco small subunit multigene family from Mesembryanthemum crystallinum, a facultative CAM plant.</title>
        <authorList>
            <person name="Derocher E.J."/>
            <person name="Quigley F."/>
            <person name="Mache R."/>
            <person name="Bohnert H.J."/>
        </authorList>
    </citation>
    <scope>NUCLEOTIDE SEQUENCE</scope>
    <scope>INDUCTION</scope>
</reference>
<reference key="2">
    <citation type="journal article" date="1991" name="Plant Physiol.">
        <title>cDNA sequences for transcripts of the ribulose-1,5-bisphosphate carboxylase/oxygenase small subunit gene family of Mesembryanthemum crystallinum.</title>
        <authorList>
            <person name="Derocher E.J."/>
            <person name="Michalowski C.B."/>
            <person name="Bohnert H.J."/>
        </authorList>
    </citation>
    <scope>NUCLEOTIDE SEQUENCE</scope>
</reference>
<evidence type="ECO:0000255" key="1">
    <source>
        <dbReference type="HAMAP-Rule" id="MF_00860"/>
    </source>
</evidence>
<evidence type="ECO:0000269" key="2">
    <source>
    </source>
</evidence>
<evidence type="ECO:0000303" key="3">
    <source>
    </source>
</evidence>
<evidence type="ECO:0000305" key="4"/>
<protein>
    <recommendedName>
        <fullName evidence="1">Ribulose bisphosphate carboxylase small subunit, chloroplastic 2</fullName>
        <shortName evidence="1">RuBisCO small subunit 2</shortName>
    </recommendedName>
</protein>